<sequence length="284" mass="31096">MTELIDGKALAQKMQQELAAKVNNLKQKKGIVPGLAVILVGDDPASQVYVRNKERAALTVGFKSETVRLSEFICQEELIAVIERYNADNTIHGILVQLPLPNHINDKKIILAIDPKKDVDGFHPMNTGHLWSGRPLMVPCTPSGIMELLREYNVNLEGKHAVIIGRSNIVGKPMAQLLLDKNATVTLTHSRTRQLEEVCRCADVLIVAIGQGHFITKQYIKEGAIVIDVGMNRDDNGKLIGDVAFDEVAEVAAKITPVPGGVGPMTIAMLLEQTYQSALRSTHK</sequence>
<keyword id="KW-0028">Amino-acid biosynthesis</keyword>
<keyword id="KW-0368">Histidine biosynthesis</keyword>
<keyword id="KW-0378">Hydrolase</keyword>
<keyword id="KW-0486">Methionine biosynthesis</keyword>
<keyword id="KW-0511">Multifunctional enzyme</keyword>
<keyword id="KW-0521">NADP</keyword>
<keyword id="KW-0554">One-carbon metabolism</keyword>
<keyword id="KW-0560">Oxidoreductase</keyword>
<keyword id="KW-0658">Purine biosynthesis</keyword>
<proteinExistence type="inferred from homology"/>
<dbReference type="EC" id="1.5.1.5" evidence="1"/>
<dbReference type="EC" id="3.5.4.9" evidence="1"/>
<dbReference type="EMBL" id="CP000261">
    <property type="protein sequence ID" value="ABF36304.1"/>
    <property type="status" value="ALT_INIT"/>
    <property type="molecule type" value="Genomic_DNA"/>
</dbReference>
<dbReference type="SMR" id="Q1JAV4"/>
<dbReference type="KEGG" id="spj:MGAS2096_Spy1252"/>
<dbReference type="HOGENOM" id="CLU_034045_2_1_9"/>
<dbReference type="UniPathway" id="UPA00193"/>
<dbReference type="GO" id="GO:0005829">
    <property type="term" value="C:cytosol"/>
    <property type="evidence" value="ECO:0007669"/>
    <property type="project" value="TreeGrafter"/>
</dbReference>
<dbReference type="GO" id="GO:0004477">
    <property type="term" value="F:methenyltetrahydrofolate cyclohydrolase activity"/>
    <property type="evidence" value="ECO:0007669"/>
    <property type="project" value="UniProtKB-UniRule"/>
</dbReference>
<dbReference type="GO" id="GO:0004488">
    <property type="term" value="F:methylenetetrahydrofolate dehydrogenase (NADP+) activity"/>
    <property type="evidence" value="ECO:0007669"/>
    <property type="project" value="UniProtKB-UniRule"/>
</dbReference>
<dbReference type="GO" id="GO:0000105">
    <property type="term" value="P:L-histidine biosynthetic process"/>
    <property type="evidence" value="ECO:0007669"/>
    <property type="project" value="UniProtKB-KW"/>
</dbReference>
<dbReference type="GO" id="GO:0009086">
    <property type="term" value="P:methionine biosynthetic process"/>
    <property type="evidence" value="ECO:0007669"/>
    <property type="project" value="UniProtKB-KW"/>
</dbReference>
<dbReference type="GO" id="GO:0006164">
    <property type="term" value="P:purine nucleotide biosynthetic process"/>
    <property type="evidence" value="ECO:0007669"/>
    <property type="project" value="UniProtKB-KW"/>
</dbReference>
<dbReference type="GO" id="GO:0035999">
    <property type="term" value="P:tetrahydrofolate interconversion"/>
    <property type="evidence" value="ECO:0007669"/>
    <property type="project" value="UniProtKB-UniRule"/>
</dbReference>
<dbReference type="CDD" id="cd01080">
    <property type="entry name" value="NAD_bind_m-THF_DH_Cyclohyd"/>
    <property type="match status" value="1"/>
</dbReference>
<dbReference type="FunFam" id="3.40.50.10860:FF:000001">
    <property type="entry name" value="Bifunctional protein FolD"/>
    <property type="match status" value="1"/>
</dbReference>
<dbReference type="FunFam" id="3.40.50.720:FF:000094">
    <property type="entry name" value="Bifunctional protein FolD"/>
    <property type="match status" value="1"/>
</dbReference>
<dbReference type="Gene3D" id="3.40.50.10860">
    <property type="entry name" value="Leucine Dehydrogenase, chain A, domain 1"/>
    <property type="match status" value="1"/>
</dbReference>
<dbReference type="Gene3D" id="3.40.50.720">
    <property type="entry name" value="NAD(P)-binding Rossmann-like Domain"/>
    <property type="match status" value="1"/>
</dbReference>
<dbReference type="HAMAP" id="MF_01576">
    <property type="entry name" value="THF_DHG_CYH"/>
    <property type="match status" value="1"/>
</dbReference>
<dbReference type="InterPro" id="IPR046346">
    <property type="entry name" value="Aminoacid_DH-like_N_sf"/>
</dbReference>
<dbReference type="InterPro" id="IPR036291">
    <property type="entry name" value="NAD(P)-bd_dom_sf"/>
</dbReference>
<dbReference type="InterPro" id="IPR000672">
    <property type="entry name" value="THF_DH/CycHdrlase"/>
</dbReference>
<dbReference type="InterPro" id="IPR020630">
    <property type="entry name" value="THF_DH/CycHdrlase_cat_dom"/>
</dbReference>
<dbReference type="InterPro" id="IPR020867">
    <property type="entry name" value="THF_DH/CycHdrlase_CS"/>
</dbReference>
<dbReference type="InterPro" id="IPR020631">
    <property type="entry name" value="THF_DH/CycHdrlase_NAD-bd_dom"/>
</dbReference>
<dbReference type="NCBIfam" id="NF008058">
    <property type="entry name" value="PRK10792.1"/>
    <property type="match status" value="1"/>
</dbReference>
<dbReference type="NCBIfam" id="NF010776">
    <property type="entry name" value="PRK14179.1"/>
    <property type="match status" value="1"/>
</dbReference>
<dbReference type="NCBIfam" id="NF010783">
    <property type="entry name" value="PRK14186.1"/>
    <property type="match status" value="1"/>
</dbReference>
<dbReference type="NCBIfam" id="NF010785">
    <property type="entry name" value="PRK14188.1"/>
    <property type="match status" value="1"/>
</dbReference>
<dbReference type="PANTHER" id="PTHR48099:SF5">
    <property type="entry name" value="C-1-TETRAHYDROFOLATE SYNTHASE, CYTOPLASMIC"/>
    <property type="match status" value="1"/>
</dbReference>
<dbReference type="PANTHER" id="PTHR48099">
    <property type="entry name" value="C-1-TETRAHYDROFOLATE SYNTHASE, CYTOPLASMIC-RELATED"/>
    <property type="match status" value="1"/>
</dbReference>
<dbReference type="Pfam" id="PF00763">
    <property type="entry name" value="THF_DHG_CYH"/>
    <property type="match status" value="1"/>
</dbReference>
<dbReference type="Pfam" id="PF02882">
    <property type="entry name" value="THF_DHG_CYH_C"/>
    <property type="match status" value="1"/>
</dbReference>
<dbReference type="PRINTS" id="PR00085">
    <property type="entry name" value="THFDHDRGNASE"/>
</dbReference>
<dbReference type="SUPFAM" id="SSF53223">
    <property type="entry name" value="Aminoacid dehydrogenase-like, N-terminal domain"/>
    <property type="match status" value="1"/>
</dbReference>
<dbReference type="SUPFAM" id="SSF51735">
    <property type="entry name" value="NAD(P)-binding Rossmann-fold domains"/>
    <property type="match status" value="1"/>
</dbReference>
<dbReference type="PROSITE" id="PS00766">
    <property type="entry name" value="THF_DHG_CYH_1"/>
    <property type="match status" value="1"/>
</dbReference>
<dbReference type="PROSITE" id="PS00767">
    <property type="entry name" value="THF_DHG_CYH_2"/>
    <property type="match status" value="1"/>
</dbReference>
<accession>Q1JAV4</accession>
<evidence type="ECO:0000255" key="1">
    <source>
        <dbReference type="HAMAP-Rule" id="MF_01576"/>
    </source>
</evidence>
<evidence type="ECO:0000305" key="2"/>
<comment type="function">
    <text evidence="1">Catalyzes the oxidation of 5,10-methylenetetrahydrofolate to 5,10-methenyltetrahydrofolate and then the hydrolysis of 5,10-methenyltetrahydrofolate to 10-formyltetrahydrofolate.</text>
</comment>
<comment type="catalytic activity">
    <reaction evidence="1">
        <text>(6R)-5,10-methylene-5,6,7,8-tetrahydrofolate + NADP(+) = (6R)-5,10-methenyltetrahydrofolate + NADPH</text>
        <dbReference type="Rhea" id="RHEA:22812"/>
        <dbReference type="ChEBI" id="CHEBI:15636"/>
        <dbReference type="ChEBI" id="CHEBI:57455"/>
        <dbReference type="ChEBI" id="CHEBI:57783"/>
        <dbReference type="ChEBI" id="CHEBI:58349"/>
        <dbReference type="EC" id="1.5.1.5"/>
    </reaction>
</comment>
<comment type="catalytic activity">
    <reaction evidence="1">
        <text>(6R)-5,10-methenyltetrahydrofolate + H2O = (6R)-10-formyltetrahydrofolate + H(+)</text>
        <dbReference type="Rhea" id="RHEA:23700"/>
        <dbReference type="ChEBI" id="CHEBI:15377"/>
        <dbReference type="ChEBI" id="CHEBI:15378"/>
        <dbReference type="ChEBI" id="CHEBI:57455"/>
        <dbReference type="ChEBI" id="CHEBI:195366"/>
        <dbReference type="EC" id="3.5.4.9"/>
    </reaction>
</comment>
<comment type="pathway">
    <text evidence="1">One-carbon metabolism; tetrahydrofolate interconversion.</text>
</comment>
<comment type="subunit">
    <text evidence="1">Homodimer.</text>
</comment>
<comment type="similarity">
    <text evidence="1">Belongs to the tetrahydrofolate dehydrogenase/cyclohydrolase family.</text>
</comment>
<comment type="sequence caution" evidence="2">
    <conflict type="erroneous initiation">
        <sequence resource="EMBL-CDS" id="ABF36304"/>
    </conflict>
</comment>
<protein>
    <recommendedName>
        <fullName evidence="1">Bifunctional protein FolD</fullName>
    </recommendedName>
    <domain>
        <recommendedName>
            <fullName evidence="1">Methylenetetrahydrofolate dehydrogenase</fullName>
            <ecNumber evidence="1">1.5.1.5</ecNumber>
        </recommendedName>
    </domain>
    <domain>
        <recommendedName>
            <fullName evidence="1">Methenyltetrahydrofolate cyclohydrolase</fullName>
            <ecNumber evidence="1">3.5.4.9</ecNumber>
        </recommendedName>
    </domain>
</protein>
<organism>
    <name type="scientific">Streptococcus pyogenes serotype M12 (strain MGAS2096)</name>
    <dbReference type="NCBI Taxonomy" id="370553"/>
    <lineage>
        <taxon>Bacteria</taxon>
        <taxon>Bacillati</taxon>
        <taxon>Bacillota</taxon>
        <taxon>Bacilli</taxon>
        <taxon>Lactobacillales</taxon>
        <taxon>Streptococcaceae</taxon>
        <taxon>Streptococcus</taxon>
    </lineage>
</organism>
<reference key="1">
    <citation type="journal article" date="2006" name="Proc. Natl. Acad. Sci. U.S.A.">
        <title>Molecular genetic anatomy of inter- and intraserotype variation in the human bacterial pathogen group A Streptococcus.</title>
        <authorList>
            <person name="Beres S.B."/>
            <person name="Richter E.W."/>
            <person name="Nagiec M.J."/>
            <person name="Sumby P."/>
            <person name="Porcella S.F."/>
            <person name="DeLeo F.R."/>
            <person name="Musser J.M."/>
        </authorList>
    </citation>
    <scope>NUCLEOTIDE SEQUENCE [LARGE SCALE GENOMIC DNA]</scope>
    <source>
        <strain>MGAS2096</strain>
    </source>
</reference>
<gene>
    <name evidence="1" type="primary">folD</name>
    <name type="ordered locus">MGAS2096_Spy1252</name>
</gene>
<feature type="chain" id="PRO_0000268515" description="Bifunctional protein FolD">
    <location>
        <begin position="1"/>
        <end position="284"/>
    </location>
</feature>
<feature type="binding site" evidence="1">
    <location>
        <begin position="165"/>
        <end position="167"/>
    </location>
    <ligand>
        <name>NADP(+)</name>
        <dbReference type="ChEBI" id="CHEBI:58349"/>
    </ligand>
</feature>
<feature type="binding site" evidence="1">
    <location>
        <position position="190"/>
    </location>
    <ligand>
        <name>NADP(+)</name>
        <dbReference type="ChEBI" id="CHEBI:58349"/>
    </ligand>
</feature>
<name>FOLD_STRPB</name>